<reference key="1">
    <citation type="journal article" date="2011" name="BMC Plant Biol.">
        <title>Transcriptome mining, functional characterization, and phylogeny of a large terpene synthase gene family in spruce (Picea spp.).</title>
        <authorList>
            <person name="Keeling C.I."/>
            <person name="Weisshaar S."/>
            <person name="Ralph S.G."/>
            <person name="Jancsik S."/>
            <person name="Hamberger B."/>
            <person name="Dullat H.K."/>
            <person name="Bohlmann J."/>
        </authorList>
    </citation>
    <scope>NUCLEOTIDE SEQUENCE [MRNA] (ISOFORM 1)</scope>
    <scope>CATALYTIC ACTIVITY</scope>
    <scope>FUNCTION</scope>
    <scope>PATHWAY</scope>
    <scope>GENE FAMILY</scope>
    <source>
        <strain>cv. FB3-425</strain>
    </source>
</reference>
<reference key="2">
    <citation type="journal article" date="2006" name="Plant Physiol.">
        <title>Wound-induced terpene synthase gene expression in Sitka spruce that exhibit resistance or susceptibility to attack by the white pine weevil.</title>
        <authorList>
            <person name="Byun-McKay A."/>
            <person name="Godard K.-A."/>
            <person name="Toudefallah M."/>
            <person name="Martin D.M."/>
            <person name="Alfaro R."/>
            <person name="King J."/>
            <person name="Bohlmann J."/>
            <person name="Plant A.L."/>
        </authorList>
    </citation>
    <scope>NUCLEOTIDE SEQUENCE [MRNA] OF 6-627 (ISOFORM 2)</scope>
    <scope>INDUCTION BY WOUNDING</scope>
</reference>
<name>LEVOS_PICSI</name>
<organism>
    <name type="scientific">Picea sitchensis</name>
    <name type="common">Sitka spruce</name>
    <name type="synonym">Pinus sitchensis</name>
    <dbReference type="NCBI Taxonomy" id="3332"/>
    <lineage>
        <taxon>Eukaryota</taxon>
        <taxon>Viridiplantae</taxon>
        <taxon>Streptophyta</taxon>
        <taxon>Embryophyta</taxon>
        <taxon>Tracheophyta</taxon>
        <taxon>Spermatophyta</taxon>
        <taxon>Pinopsida</taxon>
        <taxon>Pinidae</taxon>
        <taxon>Conifers I</taxon>
        <taxon>Pinales</taxon>
        <taxon>Pinaceae</taxon>
        <taxon>Picea</taxon>
    </lineage>
</organism>
<keyword id="KW-0025">Alternative splicing</keyword>
<keyword id="KW-0150">Chloroplast</keyword>
<keyword id="KW-0456">Lyase</keyword>
<keyword id="KW-0460">Magnesium</keyword>
<keyword id="KW-0479">Metal-binding</keyword>
<keyword id="KW-0934">Plastid</keyword>
<keyword id="KW-0809">Transit peptide</keyword>
<comment type="function">
    <text evidence="6">Terpene synthase (di-TPS) involved in the biosynthesis of diterpene natural products included in conifer oleoresin secretions and volatile emissions; these compounds contribute to biotic and abiotic stress defense against herbivores and pathogens (PubMed:21385377). Catalyzes the conversion of (+)-copalyl diphosphate ((+)-CPP) to isopimaradiene (PubMed:21385377).</text>
</comment>
<comment type="catalytic activity">
    <reaction evidence="6">
        <text>(+)-copalyl diphosphate = abieta-8(14),12-diene + diphosphate</text>
        <dbReference type="Rhea" id="RHEA:25548"/>
        <dbReference type="ChEBI" id="CHEBI:29616"/>
        <dbReference type="ChEBI" id="CHEBI:33019"/>
        <dbReference type="ChEBI" id="CHEBI:58635"/>
        <dbReference type="EC" id="4.2.3.32"/>
    </reaction>
</comment>
<comment type="catalytic activity">
    <reaction evidence="6">
        <text>(+)-copalyl diphosphate = abieta-7,13-diene + diphosphate</text>
        <dbReference type="Rhea" id="RHEA:13873"/>
        <dbReference type="ChEBI" id="CHEBI:30232"/>
        <dbReference type="ChEBI" id="CHEBI:33019"/>
        <dbReference type="ChEBI" id="CHEBI:58635"/>
        <dbReference type="EC" id="4.2.3.18"/>
    </reaction>
</comment>
<comment type="cofactor">
    <cofactor evidence="1">
        <name>Mg(2+)</name>
        <dbReference type="ChEBI" id="CHEBI:18420"/>
    </cofactor>
    <cofactor evidence="1">
        <name>Mn(2+)</name>
        <dbReference type="ChEBI" id="CHEBI:29035"/>
    </cofactor>
</comment>
<comment type="pathway">
    <text evidence="5">Secondary metabolite biosynthesis; terpenoid biosynthesis.</text>
</comment>
<comment type="pathway">
    <text evidence="6">Terpene metabolism; oleoresin biosynthesis.</text>
</comment>
<comment type="subcellular location">
    <subcellularLocation>
        <location evidence="4">Plastid</location>
        <location evidence="4">Chloroplast</location>
    </subcellularLocation>
</comment>
<comment type="alternative products">
    <event type="alternative splicing"/>
    <isoform>
        <id>F2XFB2-1</id>
        <name>1</name>
        <sequence type="displayed"/>
    </isoform>
    <isoform>
        <id>F2XFB2-2</id>
        <name>2</name>
        <sequence type="described" ref="VSP_061467 VSP_061468"/>
    </isoform>
</comment>
<comment type="induction">
    <text evidence="5">Accumulates in apical leaders upon wounding in both resistant and susceptible to white pine weevil (Pissodes strobi) plants.</text>
</comment>
<comment type="domain">
    <text evidence="9">The Asp-Xaa-Asp-Asp (DXDD) motif is important for the catalytic activity in the class II active site relevant for the cyclization of GGPP. The Asp-Asp-Xaa-Xaa-Asp/Glu (DDXXD/E) motif is important for the catalytic activity in the class I active site, presumably through binding to Mg(2+).</text>
</comment>
<comment type="similarity">
    <text evidence="9">Belongs to the terpene synthase family. Tpsd subfamily.</text>
</comment>
<evidence type="ECO:0000250" key="1">
    <source>
        <dbReference type="UniProtKB" id="A0A1C9J6A7"/>
    </source>
</evidence>
<evidence type="ECO:0000250" key="2">
    <source>
        <dbReference type="UniProtKB" id="C7BKP9"/>
    </source>
</evidence>
<evidence type="ECO:0000250" key="3">
    <source>
        <dbReference type="UniProtKB" id="Q40577"/>
    </source>
</evidence>
<evidence type="ECO:0000255" key="4"/>
<evidence type="ECO:0000269" key="5">
    <source>
    </source>
</evidence>
<evidence type="ECO:0000269" key="6">
    <source>
    </source>
</evidence>
<evidence type="ECO:0000303" key="7">
    <source>
    </source>
</evidence>
<evidence type="ECO:0000303" key="8">
    <source>
    </source>
</evidence>
<evidence type="ECO:0000305" key="9"/>
<gene>
    <name evidence="7 8" type="primary">TPS-LAS</name>
    <name evidence="7" type="synonym">TPS-LASl</name>
</gene>
<sequence length="859" mass="98563">MALLSSSLSSHIPTGAHHLTLNAYANTQCIPHFFSTLNAGTSAGKRSSLYLRWGKGSNKIIACVGEDSVSAPTLLKREFPPGFWKDHVIDSLTSSHKVAASDEKRIETLISEIKNMFRSMGYGETNPSAYDTAWVARIPAVDGSEQPEFPETLEWILQNQLKDGSWGEGFYFLAYDRILATLACIITLTLWRTGEIQVQKGIEFFKTQAVKIEDEADSHRPSGFEIVFPAMLKEAKVLGLDLPYELPFIKKIIEKREAKLERLPTNILYALPTTLLYSLEGLQEIVDWQKIIKLQSKDGSFLTSPASTAAVFMRTGNKKCLEFLNFVLKKFGNHVPCHYPLDLFERLWAVDTVERLGIDRHFKEEIKDALDYVYSHWDERGIGWARENLVPDIDDTAMGLRILRLHGYNVSSDVLKTFRDENGEFFCFLGQTQRGVTDMLNVNRCSHVAFPGETIMEEAKTCTERYLRNALEDVGAFDKWALKKNIRGEVEYALKYPWHRSMPRLEARSYIEHYGPNDVWLGKTMYMMPYISNEKYLELAKLDFNHVQSLHQKELRDLRRWWTSSGFTELKFTRERVTEIYFSPASFMFEPEFATCRAVYTKTSNFTVILDDLYDAHGTLDDLKLFSDSVKKWDLSLVDRMPEDMKICFMGFYNTFNEIAEEGRKRQGRDVLGYIRNVWEIQLEAYTKEAEWSAARYVPSFDEYIENASVSIALGTVVLISALFTGEILTDDVLSKIGRGSRFLQLMGLTGRLVNDTKTYEAERGQGEVASAVQCYMKDHPEISEEEALKHVYTVMENALDELNREFVNNREVPDSCRRLVFETARIMQLFYMDGDGLTLSHETEIKEHVKNCLFHPVA</sequence>
<protein>
    <recommendedName>
        <fullName evidence="8">Bifunctional levopimaradiene synthase, chloroplastic</fullName>
    </recommendedName>
    <alternativeName>
        <fullName evidence="8">Abietadiene synthase</fullName>
        <ecNumber evidence="6">4.2.3.18</ecNumber>
    </alternativeName>
    <alternativeName>
        <fullName>Levopimaradiene synthase</fullName>
        <ecNumber evidence="6">4.2.3.32</ecNumber>
    </alternativeName>
    <alternativeName>
        <fullName evidence="8">Terpene synthase TPS-LAS</fullName>
        <shortName evidence="8">PsTPS-LAS</shortName>
        <shortName evidence="7">PsTPS-LASl</shortName>
    </alternativeName>
</protein>
<proteinExistence type="evidence at protein level"/>
<feature type="transit peptide" description="Chloroplast" evidence="4">
    <location>
        <begin position="1"/>
        <end position="52"/>
    </location>
</feature>
<feature type="chain" id="PRO_0000454419" description="Bifunctional levopimaradiene synthase, chloroplastic">
    <location>
        <begin position="53"/>
        <end position="859"/>
    </location>
</feature>
<feature type="short sequence motif" description="DXDD motif" evidence="9">
    <location>
        <begin position="392"/>
        <end position="395"/>
    </location>
</feature>
<feature type="short sequence motif" description="DDXXD motif" evidence="9">
    <location>
        <begin position="611"/>
        <end position="615"/>
    </location>
</feature>
<feature type="binding site" evidence="2">
    <location>
        <position position="392"/>
    </location>
    <ligand>
        <name>Mg(2+)</name>
        <dbReference type="ChEBI" id="CHEBI:18420"/>
        <label>4</label>
    </ligand>
</feature>
<feature type="binding site" evidence="2">
    <location>
        <position position="394"/>
    </location>
    <ligand>
        <name>Mg(2+)</name>
        <dbReference type="ChEBI" id="CHEBI:18420"/>
        <label>4</label>
    </ligand>
</feature>
<feature type="binding site" evidence="3">
    <location>
        <position position="611"/>
    </location>
    <ligand>
        <name>Mg(2+)</name>
        <dbReference type="ChEBI" id="CHEBI:18420"/>
        <label>1</label>
    </ligand>
</feature>
<feature type="binding site" evidence="3">
    <location>
        <position position="611"/>
    </location>
    <ligand>
        <name>Mg(2+)</name>
        <dbReference type="ChEBI" id="CHEBI:18420"/>
        <label>2</label>
    </ligand>
</feature>
<feature type="binding site" evidence="3">
    <location>
        <position position="615"/>
    </location>
    <ligand>
        <name>Mg(2+)</name>
        <dbReference type="ChEBI" id="CHEBI:18420"/>
        <label>1</label>
    </ligand>
</feature>
<feature type="binding site" evidence="3">
    <location>
        <position position="615"/>
    </location>
    <ligand>
        <name>Mg(2+)</name>
        <dbReference type="ChEBI" id="CHEBI:18420"/>
        <label>2</label>
    </ligand>
</feature>
<feature type="binding site" evidence="3">
    <location>
        <position position="755"/>
    </location>
    <ligand>
        <name>Mg(2+)</name>
        <dbReference type="ChEBI" id="CHEBI:18420"/>
        <label>3</label>
    </ligand>
</feature>
<feature type="binding site" evidence="3">
    <location>
        <position position="763"/>
    </location>
    <ligand>
        <name>Mg(2+)</name>
        <dbReference type="ChEBI" id="CHEBI:18420"/>
        <label>3</label>
    </ligand>
</feature>
<feature type="splice variant" id="VSP_061467" description="In isoform 2.">
    <original>K</original>
    <variation>KDNQAKKL</variation>
    <location>
        <position position="55"/>
    </location>
</feature>
<feature type="splice variant" id="VSP_061468" description="In isoform 2.">
    <original>ILQNQ</original>
    <variation>FFKIS</variation>
    <location>
        <begin position="156"/>
        <end position="160"/>
    </location>
</feature>
<feature type="sequence conflict" description="In Ref. 2; ABA86246." evidence="9" ref="2">
    <original>R</original>
    <variation>Q</variation>
    <location>
        <position position="192"/>
    </location>
</feature>
<feature type="sequence conflict" description="In Ref. 2; ABA86246." evidence="9" ref="2">
    <original>T</original>
    <variation>S</variation>
    <location>
        <position position="303"/>
    </location>
</feature>
<feature type="sequence conflict" description="In Ref. 2; ABA86246." evidence="9" ref="2">
    <original>V</original>
    <variation>I</variation>
    <location>
        <position position="353"/>
    </location>
</feature>
<feature type="sequence conflict" description="In Ref. 2; ABA86246." evidence="9" ref="2">
    <original>L</original>
    <variation>P</variation>
    <location>
        <position position="389"/>
    </location>
</feature>
<feature type="sequence conflict" description="In Ref. 2; ABA86246." evidence="9" ref="2">
    <original>N</original>
    <variation>I</variation>
    <location>
        <position position="605"/>
    </location>
</feature>
<feature type="sequence conflict" description="In Ref. 2; ABA86246." evidence="9" ref="2">
    <original>LKLFS</original>
    <variation>SVVSD</variation>
    <location>
        <begin position="623"/>
        <end position="627"/>
    </location>
</feature>
<accession>F2XFB2</accession>
<accession>Q20HU9</accession>
<dbReference type="EC" id="4.2.3.18" evidence="6"/>
<dbReference type="EC" id="4.2.3.32" evidence="6"/>
<dbReference type="EMBL" id="HQ426170">
    <property type="protein sequence ID" value="ADZ45517.1"/>
    <property type="molecule type" value="mRNA"/>
</dbReference>
<dbReference type="EMBL" id="DQ195273">
    <property type="protein sequence ID" value="ABA86246.1"/>
    <property type="molecule type" value="mRNA"/>
</dbReference>
<dbReference type="SMR" id="F2XFB2"/>
<dbReference type="UniPathway" id="UPA00213"/>
<dbReference type="UniPathway" id="UPA00924"/>
<dbReference type="GO" id="GO:0009507">
    <property type="term" value="C:chloroplast"/>
    <property type="evidence" value="ECO:0007669"/>
    <property type="project" value="UniProtKB-SubCell"/>
</dbReference>
<dbReference type="GO" id="GO:0050554">
    <property type="term" value="F:abietadiene synthase activity"/>
    <property type="evidence" value="ECO:0000314"/>
    <property type="project" value="UniProtKB"/>
</dbReference>
<dbReference type="GO" id="GO:0052678">
    <property type="term" value="F:levopimaradiene synthase activity"/>
    <property type="evidence" value="ECO:0000314"/>
    <property type="project" value="UniProtKB"/>
</dbReference>
<dbReference type="GO" id="GO:0016829">
    <property type="term" value="F:lyase activity"/>
    <property type="evidence" value="ECO:0000314"/>
    <property type="project" value="UniProtKB"/>
</dbReference>
<dbReference type="GO" id="GO:0000287">
    <property type="term" value="F:magnesium ion binding"/>
    <property type="evidence" value="ECO:0007669"/>
    <property type="project" value="InterPro"/>
</dbReference>
<dbReference type="GO" id="GO:0010333">
    <property type="term" value="F:terpene synthase activity"/>
    <property type="evidence" value="ECO:0007669"/>
    <property type="project" value="InterPro"/>
</dbReference>
<dbReference type="GO" id="GO:0016102">
    <property type="term" value="P:diterpenoid biosynthetic process"/>
    <property type="evidence" value="ECO:0000314"/>
    <property type="project" value="UniProtKB"/>
</dbReference>
<dbReference type="GO" id="GO:0010597">
    <property type="term" value="P:green leaf volatile biosynthetic process"/>
    <property type="evidence" value="ECO:0000314"/>
    <property type="project" value="UniProtKB"/>
</dbReference>
<dbReference type="GO" id="GO:0009611">
    <property type="term" value="P:response to wounding"/>
    <property type="evidence" value="ECO:0000270"/>
    <property type="project" value="UniProtKB"/>
</dbReference>
<dbReference type="CDD" id="cd00684">
    <property type="entry name" value="Terpene_cyclase_plant_C1"/>
    <property type="match status" value="1"/>
</dbReference>
<dbReference type="FunFam" id="1.50.10.130:FF:000002">
    <property type="entry name" value="Ent-copalyl diphosphate synthase, chloroplastic"/>
    <property type="match status" value="1"/>
</dbReference>
<dbReference type="FunFam" id="1.10.600.10:FF:000005">
    <property type="entry name" value="Ent-kaur-16-ene synthase, chloroplastic"/>
    <property type="match status" value="1"/>
</dbReference>
<dbReference type="Gene3D" id="1.50.10.160">
    <property type="match status" value="1"/>
</dbReference>
<dbReference type="Gene3D" id="1.10.600.10">
    <property type="entry name" value="Farnesyl Diphosphate Synthase"/>
    <property type="match status" value="1"/>
</dbReference>
<dbReference type="Gene3D" id="1.50.10.130">
    <property type="entry name" value="Terpene synthase, N-terminal domain"/>
    <property type="match status" value="1"/>
</dbReference>
<dbReference type="InterPro" id="IPR008949">
    <property type="entry name" value="Isoprenoid_synthase_dom_sf"/>
</dbReference>
<dbReference type="InterPro" id="IPR034741">
    <property type="entry name" value="Terpene_cyclase-like_1_C"/>
</dbReference>
<dbReference type="InterPro" id="IPR044814">
    <property type="entry name" value="Terpene_cyclase_plant_C1"/>
</dbReference>
<dbReference type="InterPro" id="IPR001906">
    <property type="entry name" value="Terpene_synth_N"/>
</dbReference>
<dbReference type="InterPro" id="IPR036965">
    <property type="entry name" value="Terpene_synth_N_sf"/>
</dbReference>
<dbReference type="InterPro" id="IPR050148">
    <property type="entry name" value="Terpene_synthase-like"/>
</dbReference>
<dbReference type="InterPro" id="IPR005630">
    <property type="entry name" value="Terpene_synthase_metal-bd"/>
</dbReference>
<dbReference type="InterPro" id="IPR008930">
    <property type="entry name" value="Terpenoid_cyclase/PrenylTrfase"/>
</dbReference>
<dbReference type="PANTHER" id="PTHR31739:SF25">
    <property type="entry name" value="(E,E)-GERANYLLINALOOL SYNTHASE"/>
    <property type="match status" value="1"/>
</dbReference>
<dbReference type="PANTHER" id="PTHR31739">
    <property type="entry name" value="ENT-COPALYL DIPHOSPHATE SYNTHASE, CHLOROPLASTIC"/>
    <property type="match status" value="1"/>
</dbReference>
<dbReference type="Pfam" id="PF01397">
    <property type="entry name" value="Terpene_synth"/>
    <property type="match status" value="1"/>
</dbReference>
<dbReference type="Pfam" id="PF03936">
    <property type="entry name" value="Terpene_synth_C"/>
    <property type="match status" value="1"/>
</dbReference>
<dbReference type="SFLD" id="SFLDS00005">
    <property type="entry name" value="Isoprenoid_Synthase_Type_I"/>
    <property type="match status" value="1"/>
</dbReference>
<dbReference type="SFLD" id="SFLDG01019">
    <property type="entry name" value="Terpene_Cyclase_Like_1_C_Termi"/>
    <property type="match status" value="1"/>
</dbReference>
<dbReference type="SFLD" id="SFLDG01014">
    <property type="entry name" value="Terpene_Cyclase_Like_1_N-term"/>
    <property type="match status" value="1"/>
</dbReference>
<dbReference type="SFLD" id="SFLDG01605">
    <property type="entry name" value="Terpene_Cyclase_Like_1_N-term"/>
    <property type="match status" value="1"/>
</dbReference>
<dbReference type="SUPFAM" id="SSF48239">
    <property type="entry name" value="Terpenoid cyclases/Protein prenyltransferases"/>
    <property type="match status" value="2"/>
</dbReference>
<dbReference type="SUPFAM" id="SSF48576">
    <property type="entry name" value="Terpenoid synthases"/>
    <property type="match status" value="1"/>
</dbReference>